<dbReference type="EMBL" id="CP000025">
    <property type="protein sequence ID" value="AAW36286.1"/>
    <property type="molecule type" value="Genomic_DNA"/>
</dbReference>
<dbReference type="RefSeq" id="WP_002779437.1">
    <property type="nucleotide sequence ID" value="NC_003912.7"/>
</dbReference>
<dbReference type="SMR" id="Q5HSA1"/>
<dbReference type="GeneID" id="66544932"/>
<dbReference type="KEGG" id="cjr:CJE1864"/>
<dbReference type="HOGENOM" id="CLU_093315_3_0_7"/>
<dbReference type="GO" id="GO:1990904">
    <property type="term" value="C:ribonucleoprotein complex"/>
    <property type="evidence" value="ECO:0007669"/>
    <property type="project" value="UniProtKB-KW"/>
</dbReference>
<dbReference type="GO" id="GO:0005840">
    <property type="term" value="C:ribosome"/>
    <property type="evidence" value="ECO:0007669"/>
    <property type="project" value="UniProtKB-KW"/>
</dbReference>
<dbReference type="GO" id="GO:0019843">
    <property type="term" value="F:rRNA binding"/>
    <property type="evidence" value="ECO:0007669"/>
    <property type="project" value="UniProtKB-UniRule"/>
</dbReference>
<dbReference type="GO" id="GO:0003735">
    <property type="term" value="F:structural constituent of ribosome"/>
    <property type="evidence" value="ECO:0007669"/>
    <property type="project" value="InterPro"/>
</dbReference>
<dbReference type="GO" id="GO:0006412">
    <property type="term" value="P:translation"/>
    <property type="evidence" value="ECO:0007669"/>
    <property type="project" value="UniProtKB-UniRule"/>
</dbReference>
<dbReference type="CDD" id="cd06089">
    <property type="entry name" value="KOW_RPL26"/>
    <property type="match status" value="1"/>
</dbReference>
<dbReference type="FunFam" id="2.30.30.30:FF:000023">
    <property type="entry name" value="50S ribosomal protein L24"/>
    <property type="match status" value="1"/>
</dbReference>
<dbReference type="Gene3D" id="2.30.30.30">
    <property type="match status" value="1"/>
</dbReference>
<dbReference type="HAMAP" id="MF_01326_B">
    <property type="entry name" value="Ribosomal_uL24_B"/>
    <property type="match status" value="1"/>
</dbReference>
<dbReference type="InterPro" id="IPR005824">
    <property type="entry name" value="KOW"/>
</dbReference>
<dbReference type="InterPro" id="IPR014722">
    <property type="entry name" value="Rib_uL2_dom2"/>
</dbReference>
<dbReference type="InterPro" id="IPR003256">
    <property type="entry name" value="Ribosomal_uL24"/>
</dbReference>
<dbReference type="InterPro" id="IPR005825">
    <property type="entry name" value="Ribosomal_uL24_CS"/>
</dbReference>
<dbReference type="InterPro" id="IPR041988">
    <property type="entry name" value="Ribosomal_uL24_KOW"/>
</dbReference>
<dbReference type="InterPro" id="IPR008991">
    <property type="entry name" value="Translation_prot_SH3-like_sf"/>
</dbReference>
<dbReference type="NCBIfam" id="TIGR01079">
    <property type="entry name" value="rplX_bact"/>
    <property type="match status" value="1"/>
</dbReference>
<dbReference type="PANTHER" id="PTHR12903">
    <property type="entry name" value="MITOCHONDRIAL RIBOSOMAL PROTEIN L24"/>
    <property type="match status" value="1"/>
</dbReference>
<dbReference type="Pfam" id="PF00467">
    <property type="entry name" value="KOW"/>
    <property type="match status" value="1"/>
</dbReference>
<dbReference type="Pfam" id="PF17136">
    <property type="entry name" value="ribosomal_L24"/>
    <property type="match status" value="1"/>
</dbReference>
<dbReference type="SMART" id="SM00739">
    <property type="entry name" value="KOW"/>
    <property type="match status" value="1"/>
</dbReference>
<dbReference type="SUPFAM" id="SSF50104">
    <property type="entry name" value="Translation proteins SH3-like domain"/>
    <property type="match status" value="1"/>
</dbReference>
<dbReference type="PROSITE" id="PS01108">
    <property type="entry name" value="RIBOSOMAL_L24"/>
    <property type="match status" value="1"/>
</dbReference>
<protein>
    <recommendedName>
        <fullName evidence="1">Large ribosomal subunit protein uL24</fullName>
    </recommendedName>
    <alternativeName>
        <fullName evidence="2">50S ribosomal protein L24</fullName>
    </alternativeName>
</protein>
<accession>Q5HSA1</accession>
<feature type="chain" id="PRO_0000241581" description="Large ribosomal subunit protein uL24">
    <location>
        <begin position="1"/>
        <end position="77"/>
    </location>
</feature>
<reference key="1">
    <citation type="journal article" date="2005" name="PLoS Biol.">
        <title>Major structural differences and novel potential virulence mechanisms from the genomes of multiple Campylobacter species.</title>
        <authorList>
            <person name="Fouts D.E."/>
            <person name="Mongodin E.F."/>
            <person name="Mandrell R.E."/>
            <person name="Miller W.G."/>
            <person name="Rasko D.A."/>
            <person name="Ravel J."/>
            <person name="Brinkac L.M."/>
            <person name="DeBoy R.T."/>
            <person name="Parker C.T."/>
            <person name="Daugherty S.C."/>
            <person name="Dodson R.J."/>
            <person name="Durkin A.S."/>
            <person name="Madupu R."/>
            <person name="Sullivan S.A."/>
            <person name="Shetty J.U."/>
            <person name="Ayodeji M.A."/>
            <person name="Shvartsbeyn A."/>
            <person name="Schatz M.C."/>
            <person name="Badger J.H."/>
            <person name="Fraser C.M."/>
            <person name="Nelson K.E."/>
        </authorList>
    </citation>
    <scope>NUCLEOTIDE SEQUENCE [LARGE SCALE GENOMIC DNA]</scope>
    <source>
        <strain>RM1221</strain>
    </source>
</reference>
<evidence type="ECO:0000255" key="1">
    <source>
        <dbReference type="HAMAP-Rule" id="MF_01326"/>
    </source>
</evidence>
<evidence type="ECO:0000305" key="2"/>
<comment type="function">
    <text evidence="1">One of two assembly initiator proteins, it binds directly to the 5'-end of the 23S rRNA, where it nucleates assembly of the 50S subunit.</text>
</comment>
<comment type="function">
    <text evidence="1">One of the proteins that surrounds the polypeptide exit tunnel on the outside of the subunit.</text>
</comment>
<comment type="subunit">
    <text evidence="1">Part of the 50S ribosomal subunit.</text>
</comment>
<comment type="similarity">
    <text evidence="1">Belongs to the universal ribosomal protein uL24 family.</text>
</comment>
<proteinExistence type="inferred from homology"/>
<organism>
    <name type="scientific">Campylobacter jejuni (strain RM1221)</name>
    <dbReference type="NCBI Taxonomy" id="195099"/>
    <lineage>
        <taxon>Bacteria</taxon>
        <taxon>Pseudomonadati</taxon>
        <taxon>Campylobacterota</taxon>
        <taxon>Epsilonproteobacteria</taxon>
        <taxon>Campylobacterales</taxon>
        <taxon>Campylobacteraceae</taxon>
        <taxon>Campylobacter</taxon>
    </lineage>
</organism>
<keyword id="KW-0687">Ribonucleoprotein</keyword>
<keyword id="KW-0689">Ribosomal protein</keyword>
<keyword id="KW-0694">RNA-binding</keyword>
<keyword id="KW-0699">rRNA-binding</keyword>
<gene>
    <name evidence="1" type="primary">rplX</name>
    <name type="ordered locus">CJE1864</name>
</gene>
<name>RL24_CAMJR</name>
<sequence>MAVKLKIKKGDSVKVITGDDKGKTGKVLAVYPKTLKVVVEGCKIAKKAIKPSEKNPNGGFINKEMPMDISNVAKVQE</sequence>